<accession>B5F6T7</accession>
<keyword id="KW-0963">Cytoplasm</keyword>
<keyword id="KW-0690">Ribosome biogenesis</keyword>
<organism>
    <name type="scientific">Salmonella agona (strain SL483)</name>
    <dbReference type="NCBI Taxonomy" id="454166"/>
    <lineage>
        <taxon>Bacteria</taxon>
        <taxon>Pseudomonadati</taxon>
        <taxon>Pseudomonadota</taxon>
        <taxon>Gammaproteobacteria</taxon>
        <taxon>Enterobacterales</taxon>
        <taxon>Enterobacteriaceae</taxon>
        <taxon>Salmonella</taxon>
    </lineage>
</organism>
<evidence type="ECO:0000255" key="1">
    <source>
        <dbReference type="HAMAP-Rule" id="MF_00003"/>
    </source>
</evidence>
<protein>
    <recommendedName>
        <fullName evidence="1">Ribosome-binding factor A</fullName>
    </recommendedName>
</protein>
<dbReference type="EMBL" id="CP001138">
    <property type="protein sequence ID" value="ACH48916.1"/>
    <property type="molecule type" value="Genomic_DNA"/>
</dbReference>
<dbReference type="RefSeq" id="WP_001040208.1">
    <property type="nucleotide sequence ID" value="NC_011149.1"/>
</dbReference>
<dbReference type="SMR" id="B5F6T7"/>
<dbReference type="KEGG" id="sea:SeAg_B3474"/>
<dbReference type="HOGENOM" id="CLU_089475_5_0_6"/>
<dbReference type="Proteomes" id="UP000008819">
    <property type="component" value="Chromosome"/>
</dbReference>
<dbReference type="GO" id="GO:0005829">
    <property type="term" value="C:cytosol"/>
    <property type="evidence" value="ECO:0007669"/>
    <property type="project" value="TreeGrafter"/>
</dbReference>
<dbReference type="GO" id="GO:0043024">
    <property type="term" value="F:ribosomal small subunit binding"/>
    <property type="evidence" value="ECO:0007669"/>
    <property type="project" value="TreeGrafter"/>
</dbReference>
<dbReference type="GO" id="GO:0030490">
    <property type="term" value="P:maturation of SSU-rRNA"/>
    <property type="evidence" value="ECO:0007669"/>
    <property type="project" value="UniProtKB-UniRule"/>
</dbReference>
<dbReference type="FunFam" id="3.30.300.20:FF:000007">
    <property type="entry name" value="Ribosome-binding factor A"/>
    <property type="match status" value="1"/>
</dbReference>
<dbReference type="Gene3D" id="3.30.300.20">
    <property type="match status" value="1"/>
</dbReference>
<dbReference type="HAMAP" id="MF_00003">
    <property type="entry name" value="RbfA"/>
    <property type="match status" value="1"/>
</dbReference>
<dbReference type="InterPro" id="IPR015946">
    <property type="entry name" value="KH_dom-like_a/b"/>
</dbReference>
<dbReference type="InterPro" id="IPR000238">
    <property type="entry name" value="RbfA"/>
</dbReference>
<dbReference type="InterPro" id="IPR023799">
    <property type="entry name" value="RbfA_dom_sf"/>
</dbReference>
<dbReference type="InterPro" id="IPR020053">
    <property type="entry name" value="Ribosome-bd_factorA_CS"/>
</dbReference>
<dbReference type="NCBIfam" id="TIGR00082">
    <property type="entry name" value="rbfA"/>
    <property type="match status" value="1"/>
</dbReference>
<dbReference type="PANTHER" id="PTHR33515">
    <property type="entry name" value="RIBOSOME-BINDING FACTOR A, CHLOROPLASTIC-RELATED"/>
    <property type="match status" value="1"/>
</dbReference>
<dbReference type="PANTHER" id="PTHR33515:SF1">
    <property type="entry name" value="RIBOSOME-BINDING FACTOR A, CHLOROPLASTIC-RELATED"/>
    <property type="match status" value="1"/>
</dbReference>
<dbReference type="Pfam" id="PF02033">
    <property type="entry name" value="RBFA"/>
    <property type="match status" value="1"/>
</dbReference>
<dbReference type="SUPFAM" id="SSF89919">
    <property type="entry name" value="Ribosome-binding factor A, RbfA"/>
    <property type="match status" value="1"/>
</dbReference>
<dbReference type="PROSITE" id="PS01319">
    <property type="entry name" value="RBFA"/>
    <property type="match status" value="1"/>
</dbReference>
<comment type="function">
    <text evidence="1">One of several proteins that assist in the late maturation steps of the functional core of the 30S ribosomal subunit. Associates with free 30S ribosomal subunits (but not with 30S subunits that are part of 70S ribosomes or polysomes). Required for efficient processing of 16S rRNA. May interact with the 5'-terminal helix region of 16S rRNA.</text>
</comment>
<comment type="subunit">
    <text evidence="1">Monomer. Binds 30S ribosomal subunits, but not 50S ribosomal subunits or 70S ribosomes.</text>
</comment>
<comment type="subcellular location">
    <subcellularLocation>
        <location evidence="1">Cytoplasm</location>
    </subcellularLocation>
</comment>
<comment type="similarity">
    <text evidence="1">Belongs to the RbfA family.</text>
</comment>
<gene>
    <name evidence="1" type="primary">rbfA</name>
    <name type="ordered locus">SeAg_B3474</name>
</gene>
<proteinExistence type="inferred from homology"/>
<reference key="1">
    <citation type="journal article" date="2011" name="J. Bacteriol.">
        <title>Comparative genomics of 28 Salmonella enterica isolates: evidence for CRISPR-mediated adaptive sublineage evolution.</title>
        <authorList>
            <person name="Fricke W.F."/>
            <person name="Mammel M.K."/>
            <person name="McDermott P.F."/>
            <person name="Tartera C."/>
            <person name="White D.G."/>
            <person name="Leclerc J.E."/>
            <person name="Ravel J."/>
            <person name="Cebula T.A."/>
        </authorList>
    </citation>
    <scope>NUCLEOTIDE SEQUENCE [LARGE SCALE GENOMIC DNA]</scope>
    <source>
        <strain>SL483</strain>
    </source>
</reference>
<feature type="chain" id="PRO_1000088923" description="Ribosome-binding factor A">
    <location>
        <begin position="1"/>
        <end position="133"/>
    </location>
</feature>
<name>RBFA_SALA4</name>
<sequence>MAKEFGRPQRVAQEMQKEIALILQREIKDPRVGMMTTVSGVEMSRDLAYAKVFVTFLNDQDEAAVKNGIKALQEASGFIRSLLGKAMRLRIVPELTFFYDNSLVEGMRMSNLVTNVVKHDEERRVNPDDSKED</sequence>